<keyword id="KW-0414">Isoprene biosynthesis</keyword>
<keyword id="KW-0456">Lyase</keyword>
<keyword id="KW-0479">Metal-binding</keyword>
<keyword id="KW-0511">Multifunctional enzyme</keyword>
<keyword id="KW-0548">Nucleotidyltransferase</keyword>
<keyword id="KW-0808">Transferase</keyword>
<proteinExistence type="inferred from homology"/>
<organism>
    <name type="scientific">Wolbachia pipientis wMel</name>
    <dbReference type="NCBI Taxonomy" id="163164"/>
    <lineage>
        <taxon>Bacteria</taxon>
        <taxon>Pseudomonadati</taxon>
        <taxon>Pseudomonadota</taxon>
        <taxon>Alphaproteobacteria</taxon>
        <taxon>Rickettsiales</taxon>
        <taxon>Anaplasmataceae</taxon>
        <taxon>Wolbachieae</taxon>
        <taxon>Wolbachia</taxon>
    </lineage>
</organism>
<dbReference type="EC" id="2.7.7.60" evidence="1"/>
<dbReference type="EC" id="4.6.1.12" evidence="1"/>
<dbReference type="EMBL" id="AE017196">
    <property type="protein sequence ID" value="AAS14794.1"/>
    <property type="molecule type" value="Genomic_DNA"/>
</dbReference>
<dbReference type="RefSeq" id="WP_010963060.1">
    <property type="nucleotide sequence ID" value="NZ_OX384529.1"/>
</dbReference>
<dbReference type="SMR" id="Q73G24"/>
<dbReference type="EnsemblBacteria" id="AAS14794">
    <property type="protein sequence ID" value="AAS14794"/>
    <property type="gene ID" value="WD_1143"/>
</dbReference>
<dbReference type="KEGG" id="wol:WD_1143"/>
<dbReference type="eggNOG" id="COG0245">
    <property type="taxonomic scope" value="Bacteria"/>
</dbReference>
<dbReference type="eggNOG" id="COG1211">
    <property type="taxonomic scope" value="Bacteria"/>
</dbReference>
<dbReference type="UniPathway" id="UPA00056">
    <property type="reaction ID" value="UER00093"/>
</dbReference>
<dbReference type="UniPathway" id="UPA00056">
    <property type="reaction ID" value="UER00095"/>
</dbReference>
<dbReference type="Proteomes" id="UP000008215">
    <property type="component" value="Chromosome"/>
</dbReference>
<dbReference type="GO" id="GO:0008685">
    <property type="term" value="F:2-C-methyl-D-erythritol 2,4-cyclodiphosphate synthase activity"/>
    <property type="evidence" value="ECO:0007669"/>
    <property type="project" value="UniProtKB-UniRule"/>
</dbReference>
<dbReference type="GO" id="GO:0050518">
    <property type="term" value="F:2-C-methyl-D-erythritol 4-phosphate cytidylyltransferase activity"/>
    <property type="evidence" value="ECO:0007669"/>
    <property type="project" value="UniProtKB-UniRule"/>
</dbReference>
<dbReference type="GO" id="GO:0046872">
    <property type="term" value="F:metal ion binding"/>
    <property type="evidence" value="ECO:0007669"/>
    <property type="project" value="UniProtKB-KW"/>
</dbReference>
<dbReference type="GO" id="GO:0019288">
    <property type="term" value="P:isopentenyl diphosphate biosynthetic process, methylerythritol 4-phosphate pathway"/>
    <property type="evidence" value="ECO:0007669"/>
    <property type="project" value="UniProtKB-UniRule"/>
</dbReference>
<dbReference type="GO" id="GO:0016114">
    <property type="term" value="P:terpenoid biosynthetic process"/>
    <property type="evidence" value="ECO:0007669"/>
    <property type="project" value="InterPro"/>
</dbReference>
<dbReference type="CDD" id="cd02516">
    <property type="entry name" value="CDP-ME_synthetase"/>
    <property type="match status" value="1"/>
</dbReference>
<dbReference type="CDD" id="cd00554">
    <property type="entry name" value="MECDP_synthase"/>
    <property type="match status" value="1"/>
</dbReference>
<dbReference type="FunFam" id="3.90.550.10:FF:000003">
    <property type="entry name" value="2-C-methyl-D-erythritol 4-phosphate cytidylyltransferase"/>
    <property type="match status" value="1"/>
</dbReference>
<dbReference type="Gene3D" id="3.30.1330.50">
    <property type="entry name" value="2-C-methyl-D-erythritol 2,4-cyclodiphosphate synthase"/>
    <property type="match status" value="1"/>
</dbReference>
<dbReference type="Gene3D" id="3.90.550.10">
    <property type="entry name" value="Spore Coat Polysaccharide Biosynthesis Protein SpsA, Chain A"/>
    <property type="match status" value="1"/>
</dbReference>
<dbReference type="HAMAP" id="MF_00108">
    <property type="entry name" value="IspD"/>
    <property type="match status" value="1"/>
</dbReference>
<dbReference type="HAMAP" id="MF_01520">
    <property type="entry name" value="IspDF"/>
    <property type="match status" value="1"/>
</dbReference>
<dbReference type="HAMAP" id="MF_00107">
    <property type="entry name" value="IspF"/>
    <property type="match status" value="1"/>
</dbReference>
<dbReference type="InterPro" id="IPR001228">
    <property type="entry name" value="IspD"/>
</dbReference>
<dbReference type="InterPro" id="IPR026596">
    <property type="entry name" value="IspD/F"/>
</dbReference>
<dbReference type="InterPro" id="IPR034683">
    <property type="entry name" value="IspD/TarI"/>
</dbReference>
<dbReference type="InterPro" id="IPR003526">
    <property type="entry name" value="MECDP_synthase"/>
</dbReference>
<dbReference type="InterPro" id="IPR020555">
    <property type="entry name" value="MECDP_synthase_CS"/>
</dbReference>
<dbReference type="InterPro" id="IPR036571">
    <property type="entry name" value="MECDP_synthase_sf"/>
</dbReference>
<dbReference type="InterPro" id="IPR029044">
    <property type="entry name" value="Nucleotide-diphossugar_trans"/>
</dbReference>
<dbReference type="NCBIfam" id="TIGR00453">
    <property type="entry name" value="ispD"/>
    <property type="match status" value="1"/>
</dbReference>
<dbReference type="NCBIfam" id="TIGR00151">
    <property type="entry name" value="ispF"/>
    <property type="match status" value="1"/>
</dbReference>
<dbReference type="NCBIfam" id="NF006899">
    <property type="entry name" value="PRK09382.1"/>
    <property type="match status" value="1"/>
</dbReference>
<dbReference type="PANTHER" id="PTHR43181">
    <property type="entry name" value="2-C-METHYL-D-ERYTHRITOL 2,4-CYCLODIPHOSPHATE SYNTHASE, CHLOROPLASTIC"/>
    <property type="match status" value="1"/>
</dbReference>
<dbReference type="PANTHER" id="PTHR43181:SF1">
    <property type="entry name" value="2-C-METHYL-D-ERYTHRITOL 2,4-CYCLODIPHOSPHATE SYNTHASE, CHLOROPLASTIC"/>
    <property type="match status" value="1"/>
</dbReference>
<dbReference type="Pfam" id="PF01128">
    <property type="entry name" value="IspD"/>
    <property type="match status" value="1"/>
</dbReference>
<dbReference type="Pfam" id="PF02542">
    <property type="entry name" value="YgbB"/>
    <property type="match status" value="1"/>
</dbReference>
<dbReference type="SUPFAM" id="SSF69765">
    <property type="entry name" value="IpsF-like"/>
    <property type="match status" value="1"/>
</dbReference>
<dbReference type="SUPFAM" id="SSF53448">
    <property type="entry name" value="Nucleotide-diphospho-sugar transferases"/>
    <property type="match status" value="1"/>
</dbReference>
<dbReference type="PROSITE" id="PS01350">
    <property type="entry name" value="ISPF"/>
    <property type="match status" value="1"/>
</dbReference>
<name>ISPDF_WOLPM</name>
<sequence length="397" mass="44300">MCAKKYKIAALIVAAGVGSRCNSTIPKQYIKLAGKSVLFHTIKRFLANQYIDYIRIAINRDHESFYEKAISLITDTKLLSPVYGGENRQSSVKLGLESLQKINPDFVVIHDACRPFVSDVLIDNLVESMINDQYTGVVPAIEVEDTMSLVSNSFIESTISRGKLRAIQTPQIFNFKELLSCHQSVKEFTDDSSLMVEHKKHVAIIKGEKSNFKLTTKEDINMAKLLFEEPKFRVGAGYDIHKFIKVQNGAESFIKICGVKIEHNMAIEAHSDGDVAIHAIVDAILGALGCGDIGEHFPPSSSEWKDCNSSHFLDFAAKKAKEKGYSVSNLDITIVCEEPKISPYKVEMKKFISKALEIDDEFVNIKATTAEKLGYIGRNEGIAVHASVLLHTNFYWK</sequence>
<reference key="1">
    <citation type="journal article" date="2004" name="PLoS Biol.">
        <title>Phylogenomics of the reproductive parasite Wolbachia pipientis wMel: a streamlined genome overrun by mobile genetic elements.</title>
        <authorList>
            <person name="Wu M."/>
            <person name="Sun L.V."/>
            <person name="Vamathevan J.J."/>
            <person name="Riegler M."/>
            <person name="DeBoy R.T."/>
            <person name="Brownlie J.C."/>
            <person name="McGraw E.A."/>
            <person name="Martin W."/>
            <person name="Esser C."/>
            <person name="Ahmadinejad N."/>
            <person name="Wiegand C."/>
            <person name="Madupu R."/>
            <person name="Beanan M.J."/>
            <person name="Brinkac L.M."/>
            <person name="Daugherty S.C."/>
            <person name="Durkin A.S."/>
            <person name="Kolonay J.F."/>
            <person name="Nelson W.C."/>
            <person name="Mohamoud Y."/>
            <person name="Lee P."/>
            <person name="Berry K.J."/>
            <person name="Young M.B."/>
            <person name="Utterback T.R."/>
            <person name="Weidman J.F."/>
            <person name="Nierman W.C."/>
            <person name="Paulsen I.T."/>
            <person name="Nelson K.E."/>
            <person name="Tettelin H."/>
            <person name="O'Neill S.L."/>
            <person name="Eisen J.A."/>
        </authorList>
    </citation>
    <scope>NUCLEOTIDE SEQUENCE [LARGE SCALE GENOMIC DNA]</scope>
</reference>
<feature type="chain" id="PRO_0000075681" description="Bifunctional enzyme IspD/IspF">
    <location>
        <begin position="1"/>
        <end position="397"/>
    </location>
</feature>
<feature type="region of interest" description="2-C-methyl-D-erythritol 4-phosphate cytidylyltransferase" evidence="1">
    <location>
        <begin position="1"/>
        <end position="233"/>
    </location>
</feature>
<feature type="region of interest" description="2-C-methyl-D-erythritol 2,4-cyclodiphosphate synthase" evidence="1">
    <location>
        <begin position="233"/>
        <end position="397"/>
    </location>
</feature>
<feature type="binding site" evidence="1">
    <location>
        <begin position="239"/>
        <end position="241"/>
    </location>
    <ligand>
        <name>4-CDP-2-C-methyl-D-erythritol 2-phosphate</name>
        <dbReference type="ChEBI" id="CHEBI:57919"/>
    </ligand>
</feature>
<feature type="binding site" evidence="1">
    <location>
        <position position="239"/>
    </location>
    <ligand>
        <name>a divalent metal cation</name>
        <dbReference type="ChEBI" id="CHEBI:60240"/>
    </ligand>
</feature>
<feature type="binding site" evidence="1">
    <location>
        <position position="241"/>
    </location>
    <ligand>
        <name>a divalent metal cation</name>
        <dbReference type="ChEBI" id="CHEBI:60240"/>
    </ligand>
</feature>
<feature type="binding site" evidence="1">
    <location>
        <begin position="270"/>
        <end position="271"/>
    </location>
    <ligand>
        <name>4-CDP-2-C-methyl-D-erythritol 2-phosphate</name>
        <dbReference type="ChEBI" id="CHEBI:57919"/>
    </ligand>
</feature>
<feature type="binding site" evidence="1">
    <location>
        <position position="278"/>
    </location>
    <ligand>
        <name>a divalent metal cation</name>
        <dbReference type="ChEBI" id="CHEBI:60240"/>
    </ligand>
</feature>
<feature type="binding site" evidence="1">
    <location>
        <begin position="292"/>
        <end position="294"/>
    </location>
    <ligand>
        <name>4-CDP-2-C-methyl-D-erythritol 2-phosphate</name>
        <dbReference type="ChEBI" id="CHEBI:57919"/>
    </ligand>
</feature>
<feature type="binding site" evidence="1">
    <location>
        <begin position="368"/>
        <end position="371"/>
    </location>
    <ligand>
        <name>4-CDP-2-C-methyl-D-erythritol 2-phosphate</name>
        <dbReference type="ChEBI" id="CHEBI:57919"/>
    </ligand>
</feature>
<feature type="binding site" evidence="1">
    <location>
        <position position="375"/>
    </location>
    <ligand>
        <name>4-CDP-2-C-methyl-D-erythritol 2-phosphate</name>
        <dbReference type="ChEBI" id="CHEBI:57919"/>
    </ligand>
</feature>
<feature type="binding site" evidence="1">
    <location>
        <position position="378"/>
    </location>
    <ligand>
        <name>4-CDP-2-C-methyl-D-erythritol 2-phosphate</name>
        <dbReference type="ChEBI" id="CHEBI:57919"/>
    </ligand>
</feature>
<feature type="site" description="Transition state stabilizer" evidence="1">
    <location>
        <position position="20"/>
    </location>
</feature>
<feature type="site" description="Transition state stabilizer" evidence="1">
    <location>
        <position position="27"/>
    </location>
</feature>
<feature type="site" description="Positions MEP for the nucleophilic attack" evidence="1">
    <location>
        <position position="161"/>
    </location>
</feature>
<feature type="site" description="Positions MEP for the nucleophilic attack" evidence="1">
    <location>
        <position position="213"/>
    </location>
</feature>
<feature type="site" description="Transition state stabilizer" evidence="1">
    <location>
        <position position="270"/>
    </location>
</feature>
<feature type="site" description="Transition state stabilizer" evidence="1">
    <location>
        <position position="369"/>
    </location>
</feature>
<accession>Q73G24</accession>
<gene>
    <name evidence="1" type="primary">ispDF</name>
    <name type="ordered locus">WD_1143</name>
</gene>
<comment type="function">
    <text evidence="1">Bifunctional enzyme that catalyzes the formation of 4-diphosphocytidyl-2-C-methyl-D-erythritol from CTP and 2-C-methyl-D-erythritol 4-phosphate (MEP) (IspD), and catalyzes the conversion of 4-diphosphocytidyl-2-C-methyl-D-erythritol 2-phosphate (CDP-ME2P) to 2-C-methyl-D-erythritol 2,4-cyclodiphosphate (ME-CPP) with a corresponding release of cytidine 5-monophosphate (CMP) (IspF).</text>
</comment>
<comment type="catalytic activity">
    <reaction evidence="1">
        <text>2-C-methyl-D-erythritol 4-phosphate + CTP + H(+) = 4-CDP-2-C-methyl-D-erythritol + diphosphate</text>
        <dbReference type="Rhea" id="RHEA:13429"/>
        <dbReference type="ChEBI" id="CHEBI:15378"/>
        <dbReference type="ChEBI" id="CHEBI:33019"/>
        <dbReference type="ChEBI" id="CHEBI:37563"/>
        <dbReference type="ChEBI" id="CHEBI:57823"/>
        <dbReference type="ChEBI" id="CHEBI:58262"/>
        <dbReference type="EC" id="2.7.7.60"/>
    </reaction>
</comment>
<comment type="catalytic activity">
    <reaction evidence="1">
        <text>4-CDP-2-C-methyl-D-erythritol 2-phosphate = 2-C-methyl-D-erythritol 2,4-cyclic diphosphate + CMP</text>
        <dbReference type="Rhea" id="RHEA:23864"/>
        <dbReference type="ChEBI" id="CHEBI:57919"/>
        <dbReference type="ChEBI" id="CHEBI:58483"/>
        <dbReference type="ChEBI" id="CHEBI:60377"/>
        <dbReference type="EC" id="4.6.1.12"/>
    </reaction>
</comment>
<comment type="cofactor">
    <cofactor evidence="1">
        <name>a divalent metal cation</name>
        <dbReference type="ChEBI" id="CHEBI:60240"/>
    </cofactor>
</comment>
<comment type="pathway">
    <text evidence="1">Isoprenoid biosynthesis; isopentenyl diphosphate biosynthesis via DXP pathway; isopentenyl diphosphate from 1-deoxy-D-xylulose 5-phosphate: step 2/6.</text>
</comment>
<comment type="pathway">
    <text evidence="1">Isoprenoid biosynthesis; isopentenyl diphosphate biosynthesis via DXP pathway; isopentenyl diphosphate from 1-deoxy-D-xylulose 5-phosphate: step 4/6.</text>
</comment>
<comment type="similarity">
    <text evidence="1">In the N-terminal section; belongs to the IspD/TarI cytidylyltransferase family. IspD subfamily.</text>
</comment>
<comment type="similarity">
    <text evidence="1">In the C-terminal section; belongs to the IspF family.</text>
</comment>
<evidence type="ECO:0000255" key="1">
    <source>
        <dbReference type="HAMAP-Rule" id="MF_01520"/>
    </source>
</evidence>
<protein>
    <recommendedName>
        <fullName evidence="1">Bifunctional enzyme IspD/IspF</fullName>
    </recommendedName>
    <domain>
        <recommendedName>
            <fullName evidence="1">2-C-methyl-D-erythritol 4-phosphate cytidylyltransferase</fullName>
            <ecNumber evidence="1">2.7.7.60</ecNumber>
        </recommendedName>
        <alternativeName>
            <fullName evidence="1">4-diphosphocytidyl-2C-methyl-D-erythritol synthase</fullName>
        </alternativeName>
        <alternativeName>
            <fullName evidence="1">MEP cytidylyltransferase</fullName>
            <shortName evidence="1">MCT</shortName>
        </alternativeName>
    </domain>
    <domain>
        <recommendedName>
            <fullName evidence="1">2-C-methyl-D-erythritol 2,4-cyclodiphosphate synthase</fullName>
            <shortName evidence="1">MECDP-synthase</shortName>
            <shortName evidence="1">MECPP-synthase</shortName>
            <shortName evidence="1">MECPS</shortName>
            <ecNumber evidence="1">4.6.1.12</ecNumber>
        </recommendedName>
    </domain>
</protein>